<comment type="function">
    <text evidence="1">Endonuclease that specifically degrades the RNA of RNA-DNA hybrids.</text>
</comment>
<comment type="catalytic activity">
    <reaction evidence="1">
        <text>Endonucleolytic cleavage to 5'-phosphomonoester.</text>
        <dbReference type="EC" id="3.1.26.4"/>
    </reaction>
</comment>
<comment type="cofactor">
    <cofactor evidence="1">
        <name>Mn(2+)</name>
        <dbReference type="ChEBI" id="CHEBI:29035"/>
    </cofactor>
    <cofactor evidence="1">
        <name>Mg(2+)</name>
        <dbReference type="ChEBI" id="CHEBI:18420"/>
    </cofactor>
    <text evidence="1">Manganese or magnesium. Binds 1 divalent metal ion per monomer in the absence of substrate. May bind a second metal ion after substrate binding.</text>
</comment>
<comment type="subcellular location">
    <subcellularLocation>
        <location evidence="1">Cytoplasm</location>
    </subcellularLocation>
</comment>
<comment type="similarity">
    <text evidence="1">Belongs to the RNase HII family. RnhC subfamily.</text>
</comment>
<name>RNH3_CHLTA</name>
<evidence type="ECO:0000255" key="1">
    <source>
        <dbReference type="HAMAP-Rule" id="MF_00053"/>
    </source>
</evidence>
<evidence type="ECO:0000255" key="2">
    <source>
        <dbReference type="PROSITE-ProRule" id="PRU01319"/>
    </source>
</evidence>
<sequence length="300" mass="33019">MPSSFVSQLSPSLFSILREQLEKKGFTISIPPHTVFQGRSPTVSCTVYQSGKIVVQGKGTQEFVEFFLEPEILQTFSSQNVQQDLRSRIGVDESGKGDFFGPLCTAGVYASSPQAIEALYKTSICDSKLIPDAKILSLAQNIRSLCACKVITLFPEKYNALYANFQNLNSLLAWTHATIIDNLAPHPAGAVFAISDQFASSERVLLQAVRKKCSDIELIQRHRAEQDVVVAAASILAREAFLSSIHALESQYQIRLLKGASGKVKQRAKEILHNKGQVVLEKVCKTHFKTFNEVLGSGNQ</sequence>
<dbReference type="EC" id="3.1.26.4" evidence="1"/>
<dbReference type="EMBL" id="CP000051">
    <property type="protein sequence ID" value="AAX50258.1"/>
    <property type="molecule type" value="Genomic_DNA"/>
</dbReference>
<dbReference type="RefSeq" id="WP_009871354.1">
    <property type="nucleotide sequence ID" value="NC_007429.1"/>
</dbReference>
<dbReference type="SMR" id="Q3KN14"/>
<dbReference type="KEGG" id="cta:CTA_0009"/>
<dbReference type="HOGENOM" id="CLU_059546_0_0_0"/>
<dbReference type="Proteomes" id="UP000002532">
    <property type="component" value="Chromosome"/>
</dbReference>
<dbReference type="GO" id="GO:0005737">
    <property type="term" value="C:cytoplasm"/>
    <property type="evidence" value="ECO:0007669"/>
    <property type="project" value="UniProtKB-SubCell"/>
</dbReference>
<dbReference type="GO" id="GO:0032299">
    <property type="term" value="C:ribonuclease H2 complex"/>
    <property type="evidence" value="ECO:0007669"/>
    <property type="project" value="TreeGrafter"/>
</dbReference>
<dbReference type="GO" id="GO:0000287">
    <property type="term" value="F:magnesium ion binding"/>
    <property type="evidence" value="ECO:0007669"/>
    <property type="project" value="UniProtKB-UniRule"/>
</dbReference>
<dbReference type="GO" id="GO:0003723">
    <property type="term" value="F:RNA binding"/>
    <property type="evidence" value="ECO:0007669"/>
    <property type="project" value="InterPro"/>
</dbReference>
<dbReference type="GO" id="GO:0004523">
    <property type="term" value="F:RNA-DNA hybrid ribonuclease activity"/>
    <property type="evidence" value="ECO:0007669"/>
    <property type="project" value="UniProtKB-UniRule"/>
</dbReference>
<dbReference type="GO" id="GO:0043137">
    <property type="term" value="P:DNA replication, removal of RNA primer"/>
    <property type="evidence" value="ECO:0007669"/>
    <property type="project" value="TreeGrafter"/>
</dbReference>
<dbReference type="GO" id="GO:0006298">
    <property type="term" value="P:mismatch repair"/>
    <property type="evidence" value="ECO:0007669"/>
    <property type="project" value="TreeGrafter"/>
</dbReference>
<dbReference type="CDD" id="cd06590">
    <property type="entry name" value="RNase_HII_bacteria_HIII_like"/>
    <property type="match status" value="1"/>
</dbReference>
<dbReference type="CDD" id="cd14796">
    <property type="entry name" value="RNAse_HIII_N"/>
    <property type="match status" value="1"/>
</dbReference>
<dbReference type="FunFam" id="3.30.310.10:FF:000032">
    <property type="entry name" value="Ribonuclease HIII"/>
    <property type="match status" value="1"/>
</dbReference>
<dbReference type="Gene3D" id="3.30.420.10">
    <property type="entry name" value="Ribonuclease H-like superfamily/Ribonuclease H"/>
    <property type="match status" value="1"/>
</dbReference>
<dbReference type="Gene3D" id="3.30.310.10">
    <property type="entry name" value="TATA-Binding Protein"/>
    <property type="match status" value="1"/>
</dbReference>
<dbReference type="HAMAP" id="MF_00053">
    <property type="entry name" value="RNase_HIII"/>
    <property type="match status" value="1"/>
</dbReference>
<dbReference type="InterPro" id="IPR001352">
    <property type="entry name" value="RNase_HII/HIII"/>
</dbReference>
<dbReference type="InterPro" id="IPR024567">
    <property type="entry name" value="RNase_HII/HIII_dom"/>
</dbReference>
<dbReference type="InterPro" id="IPR004641">
    <property type="entry name" value="RNase_HIII"/>
</dbReference>
<dbReference type="InterPro" id="IPR024568">
    <property type="entry name" value="RNase_HIII_N"/>
</dbReference>
<dbReference type="InterPro" id="IPR012337">
    <property type="entry name" value="RNaseH-like_sf"/>
</dbReference>
<dbReference type="InterPro" id="IPR036397">
    <property type="entry name" value="RNaseH_sf"/>
</dbReference>
<dbReference type="InterPro" id="IPR012295">
    <property type="entry name" value="TBP_dom_sf"/>
</dbReference>
<dbReference type="NCBIfam" id="TIGR00716">
    <property type="entry name" value="rnhC"/>
    <property type="match status" value="1"/>
</dbReference>
<dbReference type="PANTHER" id="PTHR10954:SF23">
    <property type="entry name" value="RIBONUCLEASE"/>
    <property type="match status" value="1"/>
</dbReference>
<dbReference type="PANTHER" id="PTHR10954">
    <property type="entry name" value="RIBONUCLEASE H2 SUBUNIT A"/>
    <property type="match status" value="1"/>
</dbReference>
<dbReference type="Pfam" id="PF11858">
    <property type="entry name" value="DUF3378"/>
    <property type="match status" value="1"/>
</dbReference>
<dbReference type="Pfam" id="PF01351">
    <property type="entry name" value="RNase_HII"/>
    <property type="match status" value="1"/>
</dbReference>
<dbReference type="PIRSF" id="PIRSF037748">
    <property type="entry name" value="RnhC"/>
    <property type="match status" value="1"/>
</dbReference>
<dbReference type="SUPFAM" id="SSF53098">
    <property type="entry name" value="Ribonuclease H-like"/>
    <property type="match status" value="1"/>
</dbReference>
<dbReference type="PROSITE" id="PS51975">
    <property type="entry name" value="RNASE_H_2"/>
    <property type="match status" value="1"/>
</dbReference>
<reference key="1">
    <citation type="journal article" date="2005" name="Infect. Immun.">
        <title>Comparative genomic analysis of Chlamydia trachomatis oculotropic and genitotropic strains.</title>
        <authorList>
            <person name="Carlson J.H."/>
            <person name="Porcella S.F."/>
            <person name="McClarty G."/>
            <person name="Caldwell H.D."/>
        </authorList>
    </citation>
    <scope>NUCLEOTIDE SEQUENCE [LARGE SCALE GENOMIC DNA]</scope>
    <source>
        <strain>ATCC VR-571B / DSM 19440 / HAR-13</strain>
    </source>
</reference>
<feature type="chain" id="PRO_1000031228" description="Ribonuclease HIII">
    <location>
        <begin position="1"/>
        <end position="300"/>
    </location>
</feature>
<feature type="domain" description="RNase H type-2" evidence="2">
    <location>
        <begin position="86"/>
        <end position="300"/>
    </location>
</feature>
<feature type="binding site" evidence="1">
    <location>
        <position position="92"/>
    </location>
    <ligand>
        <name>a divalent metal cation</name>
        <dbReference type="ChEBI" id="CHEBI:60240"/>
    </ligand>
</feature>
<feature type="binding site" evidence="1">
    <location>
        <position position="93"/>
    </location>
    <ligand>
        <name>a divalent metal cation</name>
        <dbReference type="ChEBI" id="CHEBI:60240"/>
    </ligand>
</feature>
<feature type="binding site" evidence="1">
    <location>
        <position position="196"/>
    </location>
    <ligand>
        <name>a divalent metal cation</name>
        <dbReference type="ChEBI" id="CHEBI:60240"/>
    </ligand>
</feature>
<organism>
    <name type="scientific">Chlamydia trachomatis serovar A (strain ATCC VR-571B / DSM 19440 / HAR-13)</name>
    <dbReference type="NCBI Taxonomy" id="315277"/>
    <lineage>
        <taxon>Bacteria</taxon>
        <taxon>Pseudomonadati</taxon>
        <taxon>Chlamydiota</taxon>
        <taxon>Chlamydiia</taxon>
        <taxon>Chlamydiales</taxon>
        <taxon>Chlamydiaceae</taxon>
        <taxon>Chlamydia/Chlamydophila group</taxon>
        <taxon>Chlamydia</taxon>
    </lineage>
</organism>
<keyword id="KW-0963">Cytoplasm</keyword>
<keyword id="KW-0255">Endonuclease</keyword>
<keyword id="KW-0378">Hydrolase</keyword>
<keyword id="KW-0460">Magnesium</keyword>
<keyword id="KW-0479">Metal-binding</keyword>
<keyword id="KW-0540">Nuclease</keyword>
<protein>
    <recommendedName>
        <fullName evidence="1">Ribonuclease HIII</fullName>
        <shortName evidence="1">RNase HIII</shortName>
        <ecNumber evidence="1">3.1.26.4</ecNumber>
    </recommendedName>
</protein>
<gene>
    <name evidence="1" type="primary">rnhC</name>
    <name type="ordered locus">CTA_0009</name>
</gene>
<proteinExistence type="inferred from homology"/>
<accession>Q3KN14</accession>